<gene>
    <name evidence="1" type="primary">coaD</name>
    <name type="ordered locus">SBO_3636</name>
</gene>
<feature type="chain" id="PRO_1000011238" description="Phosphopantetheine adenylyltransferase">
    <location>
        <begin position="1"/>
        <end position="159"/>
    </location>
</feature>
<feature type="binding site" evidence="1">
    <location>
        <begin position="10"/>
        <end position="11"/>
    </location>
    <ligand>
        <name>ATP</name>
        <dbReference type="ChEBI" id="CHEBI:30616"/>
    </ligand>
</feature>
<feature type="binding site" evidence="1">
    <location>
        <position position="10"/>
    </location>
    <ligand>
        <name>substrate</name>
    </ligand>
</feature>
<feature type="binding site" evidence="1">
    <location>
        <position position="18"/>
    </location>
    <ligand>
        <name>ATP</name>
        <dbReference type="ChEBI" id="CHEBI:30616"/>
    </ligand>
</feature>
<feature type="binding site" evidence="1">
    <location>
        <position position="42"/>
    </location>
    <ligand>
        <name>substrate</name>
    </ligand>
</feature>
<feature type="binding site" evidence="1">
    <location>
        <position position="74"/>
    </location>
    <ligand>
        <name>substrate</name>
    </ligand>
</feature>
<feature type="binding site" evidence="1">
    <location>
        <position position="88"/>
    </location>
    <ligand>
        <name>substrate</name>
    </ligand>
</feature>
<feature type="binding site" evidence="1">
    <location>
        <begin position="89"/>
        <end position="91"/>
    </location>
    <ligand>
        <name>ATP</name>
        <dbReference type="ChEBI" id="CHEBI:30616"/>
    </ligand>
</feature>
<feature type="binding site" evidence="1">
    <location>
        <position position="99"/>
    </location>
    <ligand>
        <name>ATP</name>
        <dbReference type="ChEBI" id="CHEBI:30616"/>
    </ligand>
</feature>
<feature type="binding site" evidence="1">
    <location>
        <begin position="124"/>
        <end position="130"/>
    </location>
    <ligand>
        <name>ATP</name>
        <dbReference type="ChEBI" id="CHEBI:30616"/>
    </ligand>
</feature>
<feature type="site" description="Transition state stabilizer" evidence="1">
    <location>
        <position position="18"/>
    </location>
</feature>
<evidence type="ECO:0000255" key="1">
    <source>
        <dbReference type="HAMAP-Rule" id="MF_00151"/>
    </source>
</evidence>
<dbReference type="EC" id="2.7.7.3" evidence="1"/>
<dbReference type="EMBL" id="CP000036">
    <property type="protein sequence ID" value="ABB68116.1"/>
    <property type="molecule type" value="Genomic_DNA"/>
</dbReference>
<dbReference type="RefSeq" id="WP_001171866.1">
    <property type="nucleotide sequence ID" value="NC_007613.1"/>
</dbReference>
<dbReference type="SMR" id="Q31UZ2"/>
<dbReference type="GeneID" id="75202203"/>
<dbReference type="KEGG" id="sbo:SBO_3636"/>
<dbReference type="HOGENOM" id="CLU_100149_0_1_6"/>
<dbReference type="UniPathway" id="UPA00241">
    <property type="reaction ID" value="UER00355"/>
</dbReference>
<dbReference type="Proteomes" id="UP000007067">
    <property type="component" value="Chromosome"/>
</dbReference>
<dbReference type="GO" id="GO:0005737">
    <property type="term" value="C:cytoplasm"/>
    <property type="evidence" value="ECO:0007669"/>
    <property type="project" value="UniProtKB-SubCell"/>
</dbReference>
<dbReference type="GO" id="GO:0005524">
    <property type="term" value="F:ATP binding"/>
    <property type="evidence" value="ECO:0007669"/>
    <property type="project" value="UniProtKB-KW"/>
</dbReference>
<dbReference type="GO" id="GO:0004595">
    <property type="term" value="F:pantetheine-phosphate adenylyltransferase activity"/>
    <property type="evidence" value="ECO:0007669"/>
    <property type="project" value="UniProtKB-UniRule"/>
</dbReference>
<dbReference type="GO" id="GO:0015937">
    <property type="term" value="P:coenzyme A biosynthetic process"/>
    <property type="evidence" value="ECO:0007669"/>
    <property type="project" value="UniProtKB-UniRule"/>
</dbReference>
<dbReference type="CDD" id="cd02163">
    <property type="entry name" value="PPAT"/>
    <property type="match status" value="1"/>
</dbReference>
<dbReference type="FunFam" id="3.40.50.620:FF:000012">
    <property type="entry name" value="Phosphopantetheine adenylyltransferase"/>
    <property type="match status" value="1"/>
</dbReference>
<dbReference type="Gene3D" id="3.40.50.620">
    <property type="entry name" value="HUPs"/>
    <property type="match status" value="1"/>
</dbReference>
<dbReference type="HAMAP" id="MF_00151">
    <property type="entry name" value="PPAT_bact"/>
    <property type="match status" value="1"/>
</dbReference>
<dbReference type="InterPro" id="IPR004821">
    <property type="entry name" value="Cyt_trans-like"/>
</dbReference>
<dbReference type="InterPro" id="IPR001980">
    <property type="entry name" value="PPAT"/>
</dbReference>
<dbReference type="InterPro" id="IPR014729">
    <property type="entry name" value="Rossmann-like_a/b/a_fold"/>
</dbReference>
<dbReference type="NCBIfam" id="TIGR01510">
    <property type="entry name" value="coaD_prev_kdtB"/>
    <property type="match status" value="1"/>
</dbReference>
<dbReference type="NCBIfam" id="TIGR00125">
    <property type="entry name" value="cyt_tran_rel"/>
    <property type="match status" value="1"/>
</dbReference>
<dbReference type="PANTHER" id="PTHR21342">
    <property type="entry name" value="PHOSPHOPANTETHEINE ADENYLYLTRANSFERASE"/>
    <property type="match status" value="1"/>
</dbReference>
<dbReference type="PANTHER" id="PTHR21342:SF1">
    <property type="entry name" value="PHOSPHOPANTETHEINE ADENYLYLTRANSFERASE"/>
    <property type="match status" value="1"/>
</dbReference>
<dbReference type="Pfam" id="PF01467">
    <property type="entry name" value="CTP_transf_like"/>
    <property type="match status" value="1"/>
</dbReference>
<dbReference type="PRINTS" id="PR01020">
    <property type="entry name" value="LPSBIOSNTHSS"/>
</dbReference>
<dbReference type="SUPFAM" id="SSF52374">
    <property type="entry name" value="Nucleotidylyl transferase"/>
    <property type="match status" value="1"/>
</dbReference>
<protein>
    <recommendedName>
        <fullName evidence="1">Phosphopantetheine adenylyltransferase</fullName>
        <ecNumber evidence="1">2.7.7.3</ecNumber>
    </recommendedName>
    <alternativeName>
        <fullName evidence="1">Dephospho-CoA pyrophosphorylase</fullName>
    </alternativeName>
    <alternativeName>
        <fullName evidence="1">Pantetheine-phosphate adenylyltransferase</fullName>
        <shortName evidence="1">PPAT</shortName>
    </alternativeName>
</protein>
<organism>
    <name type="scientific">Shigella boydii serotype 4 (strain Sb227)</name>
    <dbReference type="NCBI Taxonomy" id="300268"/>
    <lineage>
        <taxon>Bacteria</taxon>
        <taxon>Pseudomonadati</taxon>
        <taxon>Pseudomonadota</taxon>
        <taxon>Gammaproteobacteria</taxon>
        <taxon>Enterobacterales</taxon>
        <taxon>Enterobacteriaceae</taxon>
        <taxon>Shigella</taxon>
    </lineage>
</organism>
<accession>Q31UZ2</accession>
<reference key="1">
    <citation type="journal article" date="2005" name="Nucleic Acids Res.">
        <title>Genome dynamics and diversity of Shigella species, the etiologic agents of bacillary dysentery.</title>
        <authorList>
            <person name="Yang F."/>
            <person name="Yang J."/>
            <person name="Zhang X."/>
            <person name="Chen L."/>
            <person name="Jiang Y."/>
            <person name="Yan Y."/>
            <person name="Tang X."/>
            <person name="Wang J."/>
            <person name="Xiong Z."/>
            <person name="Dong J."/>
            <person name="Xue Y."/>
            <person name="Zhu Y."/>
            <person name="Xu X."/>
            <person name="Sun L."/>
            <person name="Chen S."/>
            <person name="Nie H."/>
            <person name="Peng J."/>
            <person name="Xu J."/>
            <person name="Wang Y."/>
            <person name="Yuan Z."/>
            <person name="Wen Y."/>
            <person name="Yao Z."/>
            <person name="Shen Y."/>
            <person name="Qiang B."/>
            <person name="Hou Y."/>
            <person name="Yu J."/>
            <person name="Jin Q."/>
        </authorList>
    </citation>
    <scope>NUCLEOTIDE SEQUENCE [LARGE SCALE GENOMIC DNA]</scope>
    <source>
        <strain>Sb227</strain>
    </source>
</reference>
<comment type="function">
    <text evidence="1">Reversibly transfers an adenylyl group from ATP to 4'-phosphopantetheine, yielding dephospho-CoA (dPCoA) and pyrophosphate.</text>
</comment>
<comment type="catalytic activity">
    <reaction evidence="1">
        <text>(R)-4'-phosphopantetheine + ATP + H(+) = 3'-dephospho-CoA + diphosphate</text>
        <dbReference type="Rhea" id="RHEA:19801"/>
        <dbReference type="ChEBI" id="CHEBI:15378"/>
        <dbReference type="ChEBI" id="CHEBI:30616"/>
        <dbReference type="ChEBI" id="CHEBI:33019"/>
        <dbReference type="ChEBI" id="CHEBI:57328"/>
        <dbReference type="ChEBI" id="CHEBI:61723"/>
        <dbReference type="EC" id="2.7.7.3"/>
    </reaction>
</comment>
<comment type="cofactor">
    <cofactor evidence="1">
        <name>Mg(2+)</name>
        <dbReference type="ChEBI" id="CHEBI:18420"/>
    </cofactor>
</comment>
<comment type="pathway">
    <text evidence="1">Cofactor biosynthesis; coenzyme A biosynthesis; CoA from (R)-pantothenate: step 4/5.</text>
</comment>
<comment type="subunit">
    <text evidence="1">Homohexamer.</text>
</comment>
<comment type="subcellular location">
    <subcellularLocation>
        <location evidence="1">Cytoplasm</location>
    </subcellularLocation>
</comment>
<comment type="similarity">
    <text evidence="1">Belongs to the bacterial CoaD family.</text>
</comment>
<name>COAD_SHIBS</name>
<keyword id="KW-0067">ATP-binding</keyword>
<keyword id="KW-0173">Coenzyme A biosynthesis</keyword>
<keyword id="KW-0963">Cytoplasm</keyword>
<keyword id="KW-0460">Magnesium</keyword>
<keyword id="KW-0547">Nucleotide-binding</keyword>
<keyword id="KW-0548">Nucleotidyltransferase</keyword>
<keyword id="KW-0808">Transferase</keyword>
<sequence length="159" mass="17837">MQKRAIYPGTFDPITNGHIDIVTRATQMFDHVILAIAASPSKKPMFTLEERVALAQQATAHLGNVEVVGFSDLMANFARNQHATVLIRGLRAVADFEYEMQLAHMNRHLMPELESVFLMPSKEWSFISSSLVKEVARHQGDVTHFLPENVHQALMAKLA</sequence>
<proteinExistence type="inferred from homology"/>